<name>NUOB_CHLTE</name>
<evidence type="ECO:0000255" key="1">
    <source>
        <dbReference type="HAMAP-Rule" id="MF_01356"/>
    </source>
</evidence>
<reference key="1">
    <citation type="journal article" date="2002" name="Proc. Natl. Acad. Sci. U.S.A.">
        <title>The complete genome sequence of Chlorobium tepidum TLS, a photosynthetic, anaerobic, green-sulfur bacterium.</title>
        <authorList>
            <person name="Eisen J.A."/>
            <person name="Nelson K.E."/>
            <person name="Paulsen I.T."/>
            <person name="Heidelberg J.F."/>
            <person name="Wu M."/>
            <person name="Dodson R.J."/>
            <person name="DeBoy R.T."/>
            <person name="Gwinn M.L."/>
            <person name="Nelson W.C."/>
            <person name="Haft D.H."/>
            <person name="Hickey E.K."/>
            <person name="Peterson J.D."/>
            <person name="Durkin A.S."/>
            <person name="Kolonay J.F."/>
            <person name="Yang F."/>
            <person name="Holt I.E."/>
            <person name="Umayam L.A."/>
            <person name="Mason T.M."/>
            <person name="Brenner M."/>
            <person name="Shea T.P."/>
            <person name="Parksey D.S."/>
            <person name="Nierman W.C."/>
            <person name="Feldblyum T.V."/>
            <person name="Hansen C.L."/>
            <person name="Craven M.B."/>
            <person name="Radune D."/>
            <person name="Vamathevan J.J."/>
            <person name="Khouri H.M."/>
            <person name="White O."/>
            <person name="Gruber T.M."/>
            <person name="Ketchum K.A."/>
            <person name="Venter J.C."/>
            <person name="Tettelin H."/>
            <person name="Bryant D.A."/>
            <person name="Fraser C.M."/>
        </authorList>
    </citation>
    <scope>NUCLEOTIDE SEQUENCE [LARGE SCALE GENOMIC DNA]</scope>
    <source>
        <strain>ATCC 49652 / DSM 12025 / NBRC 103806 / TLS</strain>
    </source>
</reference>
<keyword id="KW-0004">4Fe-4S</keyword>
<keyword id="KW-0997">Cell inner membrane</keyword>
<keyword id="KW-1003">Cell membrane</keyword>
<keyword id="KW-0408">Iron</keyword>
<keyword id="KW-0411">Iron-sulfur</keyword>
<keyword id="KW-0472">Membrane</keyword>
<keyword id="KW-0479">Metal-binding</keyword>
<keyword id="KW-0520">NAD</keyword>
<keyword id="KW-0874">Quinone</keyword>
<keyword id="KW-1185">Reference proteome</keyword>
<keyword id="KW-1278">Translocase</keyword>
<keyword id="KW-0813">Transport</keyword>
<proteinExistence type="inferred from homology"/>
<accession>Q8KEC2</accession>
<gene>
    <name evidence="1" type="primary">nuoB</name>
    <name type="ordered locus">CT0767</name>
</gene>
<dbReference type="EC" id="7.1.1.-" evidence="1"/>
<dbReference type="EMBL" id="AE006470">
    <property type="protein sequence ID" value="AAM72004.1"/>
    <property type="molecule type" value="Genomic_DNA"/>
</dbReference>
<dbReference type="RefSeq" id="NP_661662.1">
    <property type="nucleotide sequence ID" value="NC_002932.3"/>
</dbReference>
<dbReference type="RefSeq" id="WP_010932449.1">
    <property type="nucleotide sequence ID" value="NC_002932.3"/>
</dbReference>
<dbReference type="SMR" id="Q8KEC2"/>
<dbReference type="STRING" id="194439.CT0767"/>
<dbReference type="EnsemblBacteria" id="AAM72004">
    <property type="protein sequence ID" value="AAM72004"/>
    <property type="gene ID" value="CT0767"/>
</dbReference>
<dbReference type="KEGG" id="cte:CT0767"/>
<dbReference type="PATRIC" id="fig|194439.7.peg.698"/>
<dbReference type="eggNOG" id="COG0377">
    <property type="taxonomic scope" value="Bacteria"/>
</dbReference>
<dbReference type="HOGENOM" id="CLU_055737_7_3_10"/>
<dbReference type="OrthoDB" id="9786737at2"/>
<dbReference type="Proteomes" id="UP000001007">
    <property type="component" value="Chromosome"/>
</dbReference>
<dbReference type="GO" id="GO:0005886">
    <property type="term" value="C:plasma membrane"/>
    <property type="evidence" value="ECO:0007669"/>
    <property type="project" value="UniProtKB-SubCell"/>
</dbReference>
<dbReference type="GO" id="GO:0045271">
    <property type="term" value="C:respiratory chain complex I"/>
    <property type="evidence" value="ECO:0007669"/>
    <property type="project" value="TreeGrafter"/>
</dbReference>
<dbReference type="GO" id="GO:0051539">
    <property type="term" value="F:4 iron, 4 sulfur cluster binding"/>
    <property type="evidence" value="ECO:0007669"/>
    <property type="project" value="UniProtKB-KW"/>
</dbReference>
<dbReference type="GO" id="GO:0005506">
    <property type="term" value="F:iron ion binding"/>
    <property type="evidence" value="ECO:0007669"/>
    <property type="project" value="UniProtKB-UniRule"/>
</dbReference>
<dbReference type="GO" id="GO:0008137">
    <property type="term" value="F:NADH dehydrogenase (ubiquinone) activity"/>
    <property type="evidence" value="ECO:0007669"/>
    <property type="project" value="InterPro"/>
</dbReference>
<dbReference type="GO" id="GO:0050136">
    <property type="term" value="F:NADH:ubiquinone reductase (non-electrogenic) activity"/>
    <property type="evidence" value="ECO:0007669"/>
    <property type="project" value="UniProtKB-UniRule"/>
</dbReference>
<dbReference type="GO" id="GO:0048038">
    <property type="term" value="F:quinone binding"/>
    <property type="evidence" value="ECO:0007669"/>
    <property type="project" value="UniProtKB-KW"/>
</dbReference>
<dbReference type="GO" id="GO:0009060">
    <property type="term" value="P:aerobic respiration"/>
    <property type="evidence" value="ECO:0007669"/>
    <property type="project" value="TreeGrafter"/>
</dbReference>
<dbReference type="GO" id="GO:0015990">
    <property type="term" value="P:electron transport coupled proton transport"/>
    <property type="evidence" value="ECO:0007669"/>
    <property type="project" value="TreeGrafter"/>
</dbReference>
<dbReference type="FunFam" id="3.40.50.12280:FF:000002">
    <property type="entry name" value="NADH-quinone oxidoreductase subunit B"/>
    <property type="match status" value="1"/>
</dbReference>
<dbReference type="Gene3D" id="3.40.50.12280">
    <property type="match status" value="1"/>
</dbReference>
<dbReference type="HAMAP" id="MF_01356">
    <property type="entry name" value="NDH1_NuoB"/>
    <property type="match status" value="1"/>
</dbReference>
<dbReference type="InterPro" id="IPR006137">
    <property type="entry name" value="NADH_UbQ_OxRdtase-like_20kDa"/>
</dbReference>
<dbReference type="InterPro" id="IPR006138">
    <property type="entry name" value="NADH_UQ_OxRdtase_20Kd_su"/>
</dbReference>
<dbReference type="NCBIfam" id="TIGR01957">
    <property type="entry name" value="nuoB_fam"/>
    <property type="match status" value="1"/>
</dbReference>
<dbReference type="NCBIfam" id="NF005012">
    <property type="entry name" value="PRK06411.1"/>
    <property type="match status" value="1"/>
</dbReference>
<dbReference type="NCBIfam" id="NF011388">
    <property type="entry name" value="PRK14813.1"/>
    <property type="match status" value="1"/>
</dbReference>
<dbReference type="PANTHER" id="PTHR11995">
    <property type="entry name" value="NADH DEHYDROGENASE"/>
    <property type="match status" value="1"/>
</dbReference>
<dbReference type="PANTHER" id="PTHR11995:SF14">
    <property type="entry name" value="NADH DEHYDROGENASE [UBIQUINONE] IRON-SULFUR PROTEIN 7, MITOCHONDRIAL"/>
    <property type="match status" value="1"/>
</dbReference>
<dbReference type="Pfam" id="PF01058">
    <property type="entry name" value="Oxidored_q6"/>
    <property type="match status" value="1"/>
</dbReference>
<dbReference type="SUPFAM" id="SSF56770">
    <property type="entry name" value="HydA/Nqo6-like"/>
    <property type="match status" value="1"/>
</dbReference>
<dbReference type="PROSITE" id="PS01150">
    <property type="entry name" value="COMPLEX1_20K"/>
    <property type="match status" value="1"/>
</dbReference>
<feature type="chain" id="PRO_1000166654" description="NADH-quinone oxidoreductase subunit B">
    <location>
        <begin position="1"/>
        <end position="189"/>
    </location>
</feature>
<feature type="binding site" evidence="1">
    <location>
        <position position="39"/>
    </location>
    <ligand>
        <name>[4Fe-4S] cluster</name>
        <dbReference type="ChEBI" id="CHEBI:49883"/>
    </ligand>
</feature>
<feature type="binding site" evidence="1">
    <location>
        <position position="40"/>
    </location>
    <ligand>
        <name>[4Fe-4S] cluster</name>
        <dbReference type="ChEBI" id="CHEBI:49883"/>
    </ligand>
</feature>
<feature type="binding site" evidence="1">
    <location>
        <position position="104"/>
    </location>
    <ligand>
        <name>[4Fe-4S] cluster</name>
        <dbReference type="ChEBI" id="CHEBI:49883"/>
    </ligand>
</feature>
<feature type="binding site" evidence="1">
    <location>
        <position position="135"/>
    </location>
    <ligand>
        <name>[4Fe-4S] cluster</name>
        <dbReference type="ChEBI" id="CHEBI:49883"/>
    </ligand>
</feature>
<sequence>MGLLDARISNRNVLVTSVDNVMNWARLSSLWPMGFGLACCAIEMMATNASNYDLERFGIFPRSSPRQSDLMIVAGTVTMKMAERVVTLYEQMPEPRYVLSMGSCSNSGGPYWHHGYHVLKGVDRIIPVDVYVPGCPPRPEALIGGLMKIQELIRMEGLGISRQDALKKLAGKRVDPQQVIDQVRKSATA</sequence>
<organism>
    <name type="scientific">Chlorobaculum tepidum (strain ATCC 49652 / DSM 12025 / NBRC 103806 / TLS)</name>
    <name type="common">Chlorobium tepidum</name>
    <dbReference type="NCBI Taxonomy" id="194439"/>
    <lineage>
        <taxon>Bacteria</taxon>
        <taxon>Pseudomonadati</taxon>
        <taxon>Chlorobiota</taxon>
        <taxon>Chlorobiia</taxon>
        <taxon>Chlorobiales</taxon>
        <taxon>Chlorobiaceae</taxon>
        <taxon>Chlorobaculum</taxon>
    </lineage>
</organism>
<protein>
    <recommendedName>
        <fullName evidence="1">NADH-quinone oxidoreductase subunit B</fullName>
        <ecNumber evidence="1">7.1.1.-</ecNumber>
    </recommendedName>
    <alternativeName>
        <fullName evidence="1">NADH dehydrogenase I subunit B</fullName>
    </alternativeName>
    <alternativeName>
        <fullName evidence="1">NDH-1 subunit B</fullName>
    </alternativeName>
</protein>
<comment type="function">
    <text evidence="1">NDH-1 shuttles electrons from NADH, via FMN and iron-sulfur (Fe-S) centers, to quinones in the respiratory chain. The immediate electron acceptor for the enzyme in this species is believed to be a menaquinone. Couples the redox reaction to proton translocation (for every two electrons transferred, four hydrogen ions are translocated across the cytoplasmic membrane), and thus conserves the redox energy in a proton gradient.</text>
</comment>
<comment type="catalytic activity">
    <reaction evidence="1">
        <text>a quinone + NADH + 5 H(+)(in) = a quinol + NAD(+) + 4 H(+)(out)</text>
        <dbReference type="Rhea" id="RHEA:57888"/>
        <dbReference type="ChEBI" id="CHEBI:15378"/>
        <dbReference type="ChEBI" id="CHEBI:24646"/>
        <dbReference type="ChEBI" id="CHEBI:57540"/>
        <dbReference type="ChEBI" id="CHEBI:57945"/>
        <dbReference type="ChEBI" id="CHEBI:132124"/>
    </reaction>
</comment>
<comment type="cofactor">
    <cofactor evidence="1">
        <name>[4Fe-4S] cluster</name>
        <dbReference type="ChEBI" id="CHEBI:49883"/>
    </cofactor>
    <text evidence="1">Binds 1 [4Fe-4S] cluster.</text>
</comment>
<comment type="subunit">
    <text evidence="1">NDH-1 is composed of 14 different subunits. Subunits NuoB, C, D, E, F, and G constitute the peripheral sector of the complex.</text>
</comment>
<comment type="subcellular location">
    <subcellularLocation>
        <location evidence="1">Cell inner membrane</location>
        <topology evidence="1">Peripheral membrane protein</topology>
        <orientation evidence="1">Cytoplasmic side</orientation>
    </subcellularLocation>
</comment>
<comment type="similarity">
    <text evidence="1">Belongs to the complex I 20 kDa subunit family.</text>
</comment>